<feature type="chain" id="PRO_1000119999" description="UPF0145 protein FTM_0995">
    <location>
        <begin position="1"/>
        <end position="106"/>
    </location>
</feature>
<organism>
    <name type="scientific">Francisella tularensis subsp. mediasiatica (strain FSC147)</name>
    <dbReference type="NCBI Taxonomy" id="441952"/>
    <lineage>
        <taxon>Bacteria</taxon>
        <taxon>Pseudomonadati</taxon>
        <taxon>Pseudomonadota</taxon>
        <taxon>Gammaproteobacteria</taxon>
        <taxon>Thiotrichales</taxon>
        <taxon>Francisellaceae</taxon>
        <taxon>Francisella</taxon>
    </lineage>
</organism>
<comment type="similarity">
    <text evidence="1">Belongs to the UPF0145 family.</text>
</comment>
<sequence length="106" mass="11289">MILTTADTLGKREIIEYKGLVTGIIVRTPTITQGILGGLKNIIGGKNTSYTNVCKEARLHAEQEMINQAKELGANAIVAIRYDSSSLGGNTSGTEVFCYGTAVVVR</sequence>
<accession>B2SGQ7</accession>
<dbReference type="EMBL" id="CP000915">
    <property type="protein sequence ID" value="ACD30916.1"/>
    <property type="molecule type" value="Genomic_DNA"/>
</dbReference>
<dbReference type="SMR" id="B2SGQ7"/>
<dbReference type="KEGG" id="ftm:FTM_0995"/>
<dbReference type="HOGENOM" id="CLU_117144_1_1_6"/>
<dbReference type="Gene3D" id="3.30.110.70">
    <property type="entry name" value="Hypothetical protein apc22750. Chain B"/>
    <property type="match status" value="1"/>
</dbReference>
<dbReference type="HAMAP" id="MF_00338">
    <property type="entry name" value="UPF0145"/>
    <property type="match status" value="1"/>
</dbReference>
<dbReference type="InterPro" id="IPR035439">
    <property type="entry name" value="UPF0145_dom_sf"/>
</dbReference>
<dbReference type="InterPro" id="IPR002765">
    <property type="entry name" value="UPF0145_YbjQ-like"/>
</dbReference>
<dbReference type="PANTHER" id="PTHR34068">
    <property type="entry name" value="UPF0145 PROTEIN YBJQ"/>
    <property type="match status" value="1"/>
</dbReference>
<dbReference type="PANTHER" id="PTHR34068:SF1">
    <property type="entry name" value="UPF0145 PROTEIN YBJQ"/>
    <property type="match status" value="1"/>
</dbReference>
<dbReference type="Pfam" id="PF01906">
    <property type="entry name" value="YbjQ_1"/>
    <property type="match status" value="1"/>
</dbReference>
<dbReference type="SUPFAM" id="SSF117782">
    <property type="entry name" value="YbjQ-like"/>
    <property type="match status" value="1"/>
</dbReference>
<proteinExistence type="inferred from homology"/>
<gene>
    <name type="ordered locus">FTM_0995</name>
</gene>
<name>Y995_FRATM</name>
<evidence type="ECO:0000255" key="1">
    <source>
        <dbReference type="HAMAP-Rule" id="MF_00338"/>
    </source>
</evidence>
<protein>
    <recommendedName>
        <fullName evidence="1">UPF0145 protein FTM_0995</fullName>
    </recommendedName>
</protein>
<reference key="1">
    <citation type="journal article" date="2009" name="PLoS Pathog.">
        <title>Molecular evolutionary consequences of niche restriction in Francisella tularensis, a facultative intracellular pathogen.</title>
        <authorList>
            <person name="Larsson P."/>
            <person name="Elfsmark D."/>
            <person name="Svensson K."/>
            <person name="Wikstroem P."/>
            <person name="Forsman M."/>
            <person name="Brettin T."/>
            <person name="Keim P."/>
            <person name="Johansson A."/>
        </authorList>
    </citation>
    <scope>NUCLEOTIDE SEQUENCE [LARGE SCALE GENOMIC DNA]</scope>
    <source>
        <strain>FSC147</strain>
    </source>
</reference>